<dbReference type="EMBL" id="M25271">
    <property type="protein sequence ID" value="AAA45946.1"/>
    <property type="molecule type" value="Genomic_DNA"/>
</dbReference>
<dbReference type="PIR" id="A30182">
    <property type="entry name" value="VGBEHT"/>
</dbReference>
<dbReference type="SMR" id="P17176"/>
<dbReference type="GlyCosmos" id="P17176">
    <property type="glycosylation" value="6 sites, No reported glycans"/>
</dbReference>
<dbReference type="ABCD" id="P17176">
    <property type="antibodies" value="4 sequenced antibodies"/>
</dbReference>
<dbReference type="GO" id="GO:0044175">
    <property type="term" value="C:host cell endosome membrane"/>
    <property type="evidence" value="ECO:0007669"/>
    <property type="project" value="UniProtKB-SubCell"/>
</dbReference>
<dbReference type="GO" id="GO:0020002">
    <property type="term" value="C:host cell plasma membrane"/>
    <property type="evidence" value="ECO:0007669"/>
    <property type="project" value="UniProtKB-SubCell"/>
</dbReference>
<dbReference type="GO" id="GO:0016020">
    <property type="term" value="C:membrane"/>
    <property type="evidence" value="ECO:0007669"/>
    <property type="project" value="UniProtKB-KW"/>
</dbReference>
<dbReference type="GO" id="GO:0019031">
    <property type="term" value="C:viral envelope"/>
    <property type="evidence" value="ECO:0007669"/>
    <property type="project" value="UniProtKB-KW"/>
</dbReference>
<dbReference type="GO" id="GO:0055036">
    <property type="term" value="C:virion membrane"/>
    <property type="evidence" value="ECO:0007669"/>
    <property type="project" value="UniProtKB-SubCell"/>
</dbReference>
<dbReference type="GO" id="GO:0098670">
    <property type="term" value="P:entry receptor-mediated virion attachment to host cell"/>
    <property type="evidence" value="ECO:0007669"/>
    <property type="project" value="UniProtKB-KW"/>
</dbReference>
<dbReference type="GO" id="GO:0019064">
    <property type="term" value="P:fusion of virus membrane with host plasma membrane"/>
    <property type="evidence" value="ECO:0007669"/>
    <property type="project" value="UniProtKB-KW"/>
</dbReference>
<dbReference type="GO" id="GO:0046718">
    <property type="term" value="P:symbiont entry into host cell"/>
    <property type="evidence" value="ECO:0007669"/>
    <property type="project" value="UniProtKB-KW"/>
</dbReference>
<dbReference type="Gene3D" id="2.60.40.3190">
    <property type="entry name" value="Herpesvirus glycoprotein H, C-terminal domain"/>
    <property type="match status" value="1"/>
</dbReference>
<dbReference type="HAMAP" id="MF_04033">
    <property type="entry name" value="HSV_GH"/>
    <property type="match status" value="1"/>
</dbReference>
<dbReference type="InterPro" id="IPR003493">
    <property type="entry name" value="Herpes_gH"/>
</dbReference>
<dbReference type="InterPro" id="IPR035305">
    <property type="entry name" value="Herpes_glycoH_C"/>
</dbReference>
<dbReference type="InterPro" id="IPR038172">
    <property type="entry name" value="Herpes_glycoH_C_sf"/>
</dbReference>
<dbReference type="Pfam" id="PF17488">
    <property type="entry name" value="Herpes_glycoH_C"/>
    <property type="match status" value="1"/>
</dbReference>
<dbReference type="Pfam" id="PF02489">
    <property type="entry name" value="Herpes_glycop_H"/>
    <property type="match status" value="1"/>
</dbReference>
<proteinExistence type="inferred from homology"/>
<organism>
    <name type="scientific">Human cytomegalovirus (strain Towne)</name>
    <name type="common">HHV-5</name>
    <name type="synonym">Human herpesvirus 5</name>
    <dbReference type="NCBI Taxonomy" id="10363"/>
    <lineage>
        <taxon>Viruses</taxon>
        <taxon>Duplodnaviria</taxon>
        <taxon>Heunggongvirae</taxon>
        <taxon>Peploviricota</taxon>
        <taxon>Herviviricetes</taxon>
        <taxon>Herpesvirales</taxon>
        <taxon>Orthoherpesviridae</taxon>
        <taxon>Betaherpesvirinae</taxon>
        <taxon>Cytomegalovirus</taxon>
        <taxon>Cytomegalovirus humanbeta5</taxon>
        <taxon>Human cytomegalovirus</taxon>
    </lineage>
</organism>
<reference key="1">
    <citation type="journal article" date="1989" name="Virology">
        <title>The human cytomegalovirus strain Towne glycoprotein H gene encodes glycoprotein p86.</title>
        <authorList>
            <person name="Pachl C."/>
            <person name="Probert W.S."/>
            <person name="Hermsen K.M."/>
            <person name="Masiarz F.R."/>
            <person name="Rasmussen L."/>
            <person name="Merigan T.C."/>
            <person name="Spaete R.R."/>
        </authorList>
    </citation>
    <scope>NUCLEOTIDE SEQUENCE [GENOMIC DNA]</scope>
</reference>
<organismHost>
    <name type="scientific">Homo sapiens</name>
    <name type="common">Human</name>
    <dbReference type="NCBI Taxonomy" id="9606"/>
</organismHost>
<protein>
    <recommendedName>
        <fullName evidence="2">Envelope glycoprotein H</fullName>
        <shortName evidence="2">gH</shortName>
    </recommendedName>
</protein>
<keyword id="KW-1169">Fusion of virus membrane with host cell membrane</keyword>
<keyword id="KW-1168">Fusion of virus membrane with host membrane</keyword>
<keyword id="KW-0325">Glycoprotein</keyword>
<keyword id="KW-1032">Host cell membrane</keyword>
<keyword id="KW-1039">Host endosome</keyword>
<keyword id="KW-1043">Host membrane</keyword>
<keyword id="KW-0945">Host-virus interaction</keyword>
<keyword id="KW-0472">Membrane</keyword>
<keyword id="KW-0730">Sialic acid</keyword>
<keyword id="KW-0732">Signal</keyword>
<keyword id="KW-0812">Transmembrane</keyword>
<keyword id="KW-1133">Transmembrane helix</keyword>
<keyword id="KW-1161">Viral attachment to host cell</keyword>
<keyword id="KW-1234">Viral attachment to host entry receptor</keyword>
<keyword id="KW-0261">Viral envelope protein</keyword>
<keyword id="KW-1162">Viral penetration into host cytoplasm</keyword>
<keyword id="KW-0946">Virion</keyword>
<keyword id="KW-1160">Virus entry into host cell</keyword>
<comment type="function">
    <text evidence="1 2">The heterodimer glycoprotein H-glycoprotein L is required for the fusion of viral and plasma membranes leading to virus entry into the host cell. Following initial binding to host receptor, membrane fusion is mediated by the fusion machinery composed of gB and the heterodimer gH/gL. May also be involved in the fusion between the virion envelope and the outer nuclear membrane during virion morphogenesis (By similarity). In human cytomegalovirus, forms two distincts complexes to mediate viral entry, a trimer and a pentamer at the surface of the virion envelope. The gH-gL-gO trimer is required for infection in fibroblasts by interacting with host PDGFRA, and in glioblastoma cells by interacting with host EPHA2. The gH-gL-UL128-UL130-UL131A pentamer is essential for viral entry in epithelial, endothelial and myeloid cells via interaction with host NRP2 (By similarity).</text>
</comment>
<comment type="subunit">
    <text evidence="1 2">Interacts with glycoprotein L (gL); this interaction is necessary for the correct processing and cell surface expression of gH. The heterodimer gH/gL seems to interact with gB trimers during fusion (By similarity). Forms the envelope pentamer complex (PC) composed of gH, gL, UL128, UL130, and UL131A. The pentamer interacts with host NRP2. Forms the envelope trimer complex composed of gH, gL, and gO. The trimer interacts with host PDGFRA (By similarity). The trimer also interacts with host EPHA2 (By similarity).</text>
</comment>
<comment type="subcellular location">
    <subcellularLocation>
        <location evidence="1 2">Virion membrane</location>
        <topology evidence="2">Single-pass type I membrane protein</topology>
    </subcellularLocation>
    <subcellularLocation>
        <location evidence="2">Host cell membrane</location>
        <topology evidence="2">Single-pass type I membrane protein</topology>
    </subcellularLocation>
    <subcellularLocation>
        <location evidence="2">Host endosome membrane</location>
        <topology evidence="2">Single-pass type I membrane protein</topology>
    </subcellularLocation>
    <text evidence="1">During virion morphogenesis, this protein probably accumulates in the endosomes and trans-Golgi where secondary envelopment occurs. It is probably transported to the cell surface from where it is endocytosed and directed to the trans-Golgi network (TGN).</text>
</comment>
<comment type="PTM">
    <text evidence="2">N-glycosylated, O-glycosylated, and sialylated.</text>
</comment>
<comment type="similarity">
    <text evidence="2">Belongs to the herpesviridae glycoprotein H family.</text>
</comment>
<accession>P17176</accession>
<name>GH_HCMVT</name>
<gene>
    <name evidence="2" type="primary">gH</name>
    <name type="synonym">UL75</name>
</gene>
<sequence>MRPGLPSYLIVLAVCLLSHLLSSRYGAEAISEPLDKAFHLLLNTYGRPIRFLRENTTQCTYNSSLRNSTVVRENAISFNFFQSYNQYYVFHMPRCLFAGPLAEQFLNQVDLTETLERYQQRLNTYALVSKDLASYRSFSQQLKAQDSLGEQPTTVPPPIDLSIPHVWMPPQTTPHGWTESHTTSGLHRPHFNQTCILFDGHDLLFSTVTPCLHQGFYLIDELRYVKITLTEDFFVVTVSIDDDTPMLLIFGHLPRVLFKAPYQRDNFILRQTEKHELLVLVKKDQLNRHSYLKDPDFLDAALDFNYLDLSALLRNSFHRYAVDVLKSGRCQMLDRRTVEMAFAYALALFAAARQEEAGAQVSVPRALDRQAALLQIQEFMITCLSQTPPRTTLLLYPTAVDLAKRALWTPNQITDITSLVRLVYILSKQNQQHLIPQWALRQIADFALKLHKTHLASFLSAFARQELYLMGSLVHSMLVHTTERREIFIVETGLCSLAELSHFTQLLAHPHHEYLSDLYTPCSSSGRRDHSLERLTRLFPDATVPTTVPAALSILSTMQPSTLETFPDLFCLPLGESFSALTVSEHVSYVVTNQYLIKGISYPVSTTVVGQSLIITQTDSQTKCELTRNMHTTHSITAALNISLENCAFCQSALLEYDDTQGVINIMYMHDSDDVLFALDPYNEVVVSSPRTHYLMLLKNGTVLEVTDVVVDATDSRLLMMSVYALSAIIGIYLLYRMLKTC</sequence>
<feature type="signal peptide" evidence="2">
    <location>
        <begin position="1"/>
        <end position="29"/>
    </location>
</feature>
<feature type="chain" id="PRO_0000038256" description="Envelope glycoprotein H" evidence="2">
    <location>
        <begin position="30"/>
        <end position="742"/>
    </location>
</feature>
<feature type="topological domain" description="Virion surface" evidence="2">
    <location>
        <begin position="30"/>
        <end position="719"/>
    </location>
</feature>
<feature type="transmembrane region" description="Helical" evidence="2">
    <location>
        <begin position="720"/>
        <end position="740"/>
    </location>
</feature>
<feature type="topological domain" description="Intravirion" evidence="2">
    <location>
        <begin position="741"/>
        <end position="742"/>
    </location>
</feature>
<feature type="region of interest" description="Interaction with gL" evidence="2">
    <location>
        <begin position="217"/>
        <end position="280"/>
    </location>
</feature>
<feature type="glycosylation site" description="N-linked (GlcNAc...) asparagine; by host" evidence="2">
    <location>
        <position position="55"/>
    </location>
</feature>
<feature type="glycosylation site" description="N-linked (GlcNAc...) asparagine; by host" evidence="2">
    <location>
        <position position="62"/>
    </location>
</feature>
<feature type="glycosylation site" description="N-linked (GlcNAc...) asparagine; by host" evidence="2">
    <location>
        <position position="67"/>
    </location>
</feature>
<feature type="glycosylation site" description="N-linked (GlcNAc...) asparagine; by host" evidence="2">
    <location>
        <position position="192"/>
    </location>
</feature>
<feature type="glycosylation site" description="N-linked (GlcNAc...) asparagine; by host" evidence="2">
    <location>
        <position position="641"/>
    </location>
</feature>
<feature type="glycosylation site" description="N-linked (GlcNAc...) asparagine; by host" evidence="2">
    <location>
        <position position="700"/>
    </location>
</feature>
<evidence type="ECO:0000250" key="1">
    <source>
        <dbReference type="UniProtKB" id="Q6SW67"/>
    </source>
</evidence>
<evidence type="ECO:0000255" key="2">
    <source>
        <dbReference type="HAMAP-Rule" id="MF_04033"/>
    </source>
</evidence>